<accession>Q2FXZ9</accession>
<dbReference type="EMBL" id="CP000253">
    <property type="protein sequence ID" value="ABD30750.1"/>
    <property type="molecule type" value="Genomic_DNA"/>
</dbReference>
<dbReference type="RefSeq" id="WP_000492114.1">
    <property type="nucleotide sequence ID" value="NZ_LS483365.1"/>
</dbReference>
<dbReference type="RefSeq" id="YP_500186.1">
    <property type="nucleotide sequence ID" value="NC_007795.1"/>
</dbReference>
<dbReference type="SMR" id="Q2FXZ9"/>
<dbReference type="STRING" id="93061.SAOUHSC_01676"/>
<dbReference type="PaxDb" id="1280-SAXN108_1598"/>
<dbReference type="GeneID" id="3920087"/>
<dbReference type="GeneID" id="98345944"/>
<dbReference type="KEGG" id="sao:SAOUHSC_01676"/>
<dbReference type="PATRIC" id="fig|93061.5.peg.1524"/>
<dbReference type="eggNOG" id="COG4864">
    <property type="taxonomic scope" value="Bacteria"/>
</dbReference>
<dbReference type="HOGENOM" id="CLU_836378_0_0_9"/>
<dbReference type="OrthoDB" id="9808365at2"/>
<dbReference type="PRO" id="PR:Q2FXZ9"/>
<dbReference type="Proteomes" id="UP000008816">
    <property type="component" value="Chromosome"/>
</dbReference>
<dbReference type="GO" id="GO:0045121">
    <property type="term" value="C:membrane raft"/>
    <property type="evidence" value="ECO:0007669"/>
    <property type="project" value="UniProtKB-SubCell"/>
</dbReference>
<dbReference type="GO" id="GO:0005886">
    <property type="term" value="C:plasma membrane"/>
    <property type="evidence" value="ECO:0007669"/>
    <property type="project" value="UniProtKB-SubCell"/>
</dbReference>
<dbReference type="HAMAP" id="MF_01562">
    <property type="entry name" value="FloA"/>
    <property type="match status" value="1"/>
</dbReference>
<dbReference type="InterPro" id="IPR022853">
    <property type="entry name" value="FloA"/>
</dbReference>
<dbReference type="NCBIfam" id="NF010186">
    <property type="entry name" value="PRK13665.1"/>
    <property type="match status" value="1"/>
</dbReference>
<dbReference type="Pfam" id="PF12127">
    <property type="entry name" value="FloA"/>
    <property type="match status" value="1"/>
</dbReference>
<proteinExistence type="inferred from homology"/>
<reference key="1">
    <citation type="book" date="2006" name="Gram positive pathogens, 2nd edition">
        <title>The Staphylococcus aureus NCTC 8325 genome.</title>
        <editorList>
            <person name="Fischetti V."/>
            <person name="Novick R."/>
            <person name="Ferretti J."/>
            <person name="Portnoy D."/>
            <person name="Rood J."/>
        </editorList>
        <authorList>
            <person name="Gillaspy A.F."/>
            <person name="Worrell V."/>
            <person name="Orvis J."/>
            <person name="Roe B.A."/>
            <person name="Dyer D.W."/>
            <person name="Iandolo J.J."/>
        </authorList>
    </citation>
    <scope>NUCLEOTIDE SEQUENCE [LARGE SCALE GENOMIC DNA]</scope>
    <source>
        <strain>NCTC 8325 / PS 47</strain>
    </source>
</reference>
<name>FLOA_STAA8</name>
<keyword id="KW-1003">Cell membrane</keyword>
<keyword id="KW-0472">Membrane</keyword>
<keyword id="KW-1185">Reference proteome</keyword>
<keyword id="KW-0812">Transmembrane</keyword>
<keyword id="KW-1133">Transmembrane helix</keyword>
<sequence length="329" mass="35181">MFSLSFIVIAVIIVVALLILFSFVPIGLWISALAAGVHVGIGTLVGMRLRRVSPRKVIAPLIKAHKAGLALTTNQLESHYLAGGNVDRVVDANIAAQRADIDLPFERAAAIDLAGRDVLEAVQMSVNPKVIETPFIAGVAMNGIEVKAKARITVRANIARLVGGAGEETIIARVGEGIVSTIGSSKHHTEVLENPDNISKTVLSKGLDSGTAFEILSIDIADVDISKNIGADLQTEQALADKNIAQAKAEERRAMAVATEQEMKARVQEMHAKVVEAESEVPLAMAEALRSGNISVKDYYNLKNIEADTGMRNAINKRTDQSDDESPEH</sequence>
<gene>
    <name evidence="1" type="primary">floA</name>
    <name type="ordered locus">SAOUHSC_01676</name>
</gene>
<comment type="function">
    <text evidence="1">Found in functional membrane microdomains (FMM) that may be equivalent to eukaryotic membrane rafts. FMMs are highly dynamic and increase in number as cells age. Flotillins are thought to be important factors in membrane fluidity.</text>
</comment>
<comment type="subunit">
    <text evidence="1">Homooligomerizes.</text>
</comment>
<comment type="subcellular location">
    <subcellularLocation>
        <location evidence="1">Cell membrane</location>
        <topology evidence="1">Multi-pass membrane protein</topology>
    </subcellularLocation>
    <subcellularLocation>
        <location evidence="1">Membrane raft</location>
        <topology evidence="1">Multi-pass membrane protein</topology>
    </subcellularLocation>
</comment>
<comment type="similarity">
    <text evidence="1">Belongs to the flotillin-like FloA family.</text>
</comment>
<protein>
    <recommendedName>
        <fullName evidence="1">Flotillin-like protein FloA</fullName>
    </recommendedName>
</protein>
<feature type="chain" id="PRO_1000069045" description="Flotillin-like protein FloA">
    <location>
        <begin position="1"/>
        <end position="329"/>
    </location>
</feature>
<feature type="transmembrane region" description="Helical" evidence="1">
    <location>
        <begin position="6"/>
        <end position="26"/>
    </location>
</feature>
<feature type="transmembrane region" description="Helical" evidence="1">
    <location>
        <begin position="27"/>
        <end position="47"/>
    </location>
</feature>
<evidence type="ECO:0000255" key="1">
    <source>
        <dbReference type="HAMAP-Rule" id="MF_01562"/>
    </source>
</evidence>
<organism>
    <name type="scientific">Staphylococcus aureus (strain NCTC 8325 / PS 47)</name>
    <dbReference type="NCBI Taxonomy" id="93061"/>
    <lineage>
        <taxon>Bacteria</taxon>
        <taxon>Bacillati</taxon>
        <taxon>Bacillota</taxon>
        <taxon>Bacilli</taxon>
        <taxon>Bacillales</taxon>
        <taxon>Staphylococcaceae</taxon>
        <taxon>Staphylococcus</taxon>
    </lineage>
</organism>